<name>FABZ_STRPJ</name>
<organism>
    <name type="scientific">Streptococcus pneumoniae (strain ATCC 700669 / Spain 23F-1)</name>
    <dbReference type="NCBI Taxonomy" id="561276"/>
    <lineage>
        <taxon>Bacteria</taxon>
        <taxon>Bacillati</taxon>
        <taxon>Bacillota</taxon>
        <taxon>Bacilli</taxon>
        <taxon>Lactobacillales</taxon>
        <taxon>Streptococcaceae</taxon>
        <taxon>Streptococcus</taxon>
    </lineage>
</organism>
<feature type="chain" id="PRO_1000134713" description="3-hydroxyacyl-[acyl-carrier-protein] dehydratase FabZ">
    <location>
        <begin position="1"/>
        <end position="140"/>
    </location>
</feature>
<feature type="active site" evidence="1">
    <location>
        <position position="47"/>
    </location>
</feature>
<accession>B8ZLJ0</accession>
<reference key="1">
    <citation type="journal article" date="2009" name="J. Bacteriol.">
        <title>Role of conjugative elements in the evolution of the multidrug-resistant pandemic clone Streptococcus pneumoniae Spain23F ST81.</title>
        <authorList>
            <person name="Croucher N.J."/>
            <person name="Walker D."/>
            <person name="Romero P."/>
            <person name="Lennard N."/>
            <person name="Paterson G.K."/>
            <person name="Bason N.C."/>
            <person name="Mitchell A.M."/>
            <person name="Quail M.A."/>
            <person name="Andrew P.W."/>
            <person name="Parkhill J."/>
            <person name="Bentley S.D."/>
            <person name="Mitchell T.J."/>
        </authorList>
    </citation>
    <scope>NUCLEOTIDE SEQUENCE [LARGE SCALE GENOMIC DNA]</scope>
    <source>
        <strain>ATCC 700669 / Spain 23F-1</strain>
    </source>
</reference>
<dbReference type="EC" id="4.2.1.59" evidence="1"/>
<dbReference type="EMBL" id="FM211187">
    <property type="protein sequence ID" value="CAR68248.1"/>
    <property type="molecule type" value="Genomic_DNA"/>
</dbReference>
<dbReference type="RefSeq" id="WP_000565515.1">
    <property type="nucleotide sequence ID" value="NC_011900.1"/>
</dbReference>
<dbReference type="SMR" id="B8ZLJ0"/>
<dbReference type="GeneID" id="49599193"/>
<dbReference type="KEGG" id="sne:SPN23F03990"/>
<dbReference type="HOGENOM" id="CLU_078912_1_2_9"/>
<dbReference type="GO" id="GO:0005737">
    <property type="term" value="C:cytoplasm"/>
    <property type="evidence" value="ECO:0007669"/>
    <property type="project" value="UniProtKB-SubCell"/>
</dbReference>
<dbReference type="GO" id="GO:0016020">
    <property type="term" value="C:membrane"/>
    <property type="evidence" value="ECO:0007669"/>
    <property type="project" value="GOC"/>
</dbReference>
<dbReference type="GO" id="GO:0019171">
    <property type="term" value="F:(3R)-hydroxyacyl-[acyl-carrier-protein] dehydratase activity"/>
    <property type="evidence" value="ECO:0007669"/>
    <property type="project" value="UniProtKB-EC"/>
</dbReference>
<dbReference type="GO" id="GO:0006633">
    <property type="term" value="P:fatty acid biosynthetic process"/>
    <property type="evidence" value="ECO:0007669"/>
    <property type="project" value="UniProtKB-UniRule"/>
</dbReference>
<dbReference type="GO" id="GO:0009245">
    <property type="term" value="P:lipid A biosynthetic process"/>
    <property type="evidence" value="ECO:0007669"/>
    <property type="project" value="UniProtKB-UniRule"/>
</dbReference>
<dbReference type="CDD" id="cd01288">
    <property type="entry name" value="FabZ"/>
    <property type="match status" value="1"/>
</dbReference>
<dbReference type="FunFam" id="3.10.129.10:FF:000001">
    <property type="entry name" value="3-hydroxyacyl-[acyl-carrier-protein] dehydratase FabZ"/>
    <property type="match status" value="1"/>
</dbReference>
<dbReference type="Gene3D" id="3.10.129.10">
    <property type="entry name" value="Hotdog Thioesterase"/>
    <property type="match status" value="1"/>
</dbReference>
<dbReference type="HAMAP" id="MF_00406">
    <property type="entry name" value="FabZ"/>
    <property type="match status" value="1"/>
</dbReference>
<dbReference type="InterPro" id="IPR013114">
    <property type="entry name" value="FabA_FabZ"/>
</dbReference>
<dbReference type="InterPro" id="IPR010084">
    <property type="entry name" value="FabZ"/>
</dbReference>
<dbReference type="InterPro" id="IPR029069">
    <property type="entry name" value="HotDog_dom_sf"/>
</dbReference>
<dbReference type="NCBIfam" id="TIGR01750">
    <property type="entry name" value="fabZ"/>
    <property type="match status" value="1"/>
</dbReference>
<dbReference type="NCBIfam" id="NF000582">
    <property type="entry name" value="PRK00006.1"/>
    <property type="match status" value="1"/>
</dbReference>
<dbReference type="PANTHER" id="PTHR30272">
    <property type="entry name" value="3-HYDROXYACYL-[ACYL-CARRIER-PROTEIN] DEHYDRATASE"/>
    <property type="match status" value="1"/>
</dbReference>
<dbReference type="PANTHER" id="PTHR30272:SF1">
    <property type="entry name" value="3-HYDROXYACYL-[ACYL-CARRIER-PROTEIN] DEHYDRATASE"/>
    <property type="match status" value="1"/>
</dbReference>
<dbReference type="Pfam" id="PF07977">
    <property type="entry name" value="FabA"/>
    <property type="match status" value="1"/>
</dbReference>
<dbReference type="SUPFAM" id="SSF54637">
    <property type="entry name" value="Thioesterase/thiol ester dehydrase-isomerase"/>
    <property type="match status" value="1"/>
</dbReference>
<sequence length="140" mass="15286">MIDIQGIKEALPHRYPMLLVDRVLEVSEDTIVAIKNVTINEPFFNGHFPQYPVMPGVLIMEALAQTAGVLELSKPENKGKLVFYAGMDKVKFKKQVVPGDQLVMTATFVKRRGTIAVVEAKAEVDGKLAASGTLTFAIGN</sequence>
<protein>
    <recommendedName>
        <fullName evidence="1">3-hydroxyacyl-[acyl-carrier-protein] dehydratase FabZ</fullName>
        <ecNumber evidence="1">4.2.1.59</ecNumber>
    </recommendedName>
    <alternativeName>
        <fullName evidence="1">(3R)-hydroxymyristoyl-[acyl-carrier-protein] dehydratase</fullName>
        <shortName evidence="1">(3R)-hydroxymyristoyl-ACP dehydrase</shortName>
    </alternativeName>
    <alternativeName>
        <fullName evidence="1">Beta-hydroxyacyl-ACP dehydratase</fullName>
    </alternativeName>
</protein>
<keyword id="KW-0963">Cytoplasm</keyword>
<keyword id="KW-0441">Lipid A biosynthesis</keyword>
<keyword id="KW-0444">Lipid biosynthesis</keyword>
<keyword id="KW-0443">Lipid metabolism</keyword>
<keyword id="KW-0456">Lyase</keyword>
<evidence type="ECO:0000255" key="1">
    <source>
        <dbReference type="HAMAP-Rule" id="MF_00406"/>
    </source>
</evidence>
<gene>
    <name evidence="1" type="primary">fabZ</name>
    <name type="ordered locus">SPN23F03990</name>
</gene>
<comment type="function">
    <text evidence="1">Involved in unsaturated fatty acids biosynthesis. Catalyzes the dehydration of short chain beta-hydroxyacyl-ACPs and long chain saturated and unsaturated beta-hydroxyacyl-ACPs.</text>
</comment>
<comment type="catalytic activity">
    <reaction evidence="1">
        <text>a (3R)-hydroxyacyl-[ACP] = a (2E)-enoyl-[ACP] + H2O</text>
        <dbReference type="Rhea" id="RHEA:13097"/>
        <dbReference type="Rhea" id="RHEA-COMP:9925"/>
        <dbReference type="Rhea" id="RHEA-COMP:9945"/>
        <dbReference type="ChEBI" id="CHEBI:15377"/>
        <dbReference type="ChEBI" id="CHEBI:78784"/>
        <dbReference type="ChEBI" id="CHEBI:78827"/>
        <dbReference type="EC" id="4.2.1.59"/>
    </reaction>
</comment>
<comment type="subcellular location">
    <subcellularLocation>
        <location evidence="1">Cytoplasm</location>
    </subcellularLocation>
</comment>
<comment type="similarity">
    <text evidence="1">Belongs to the thioester dehydratase family. FabZ subfamily.</text>
</comment>
<proteinExistence type="inferred from homology"/>